<gene>
    <name evidence="1" type="primary">nadE</name>
    <name type="ordered locus">BceJ2315_59160</name>
    <name type="ORF">BCAM2476</name>
</gene>
<protein>
    <recommendedName>
        <fullName evidence="1">NH(3)-dependent NAD(+) synthetase</fullName>
        <ecNumber evidence="1">6.3.1.5</ecNumber>
    </recommendedName>
</protein>
<evidence type="ECO:0000255" key="1">
    <source>
        <dbReference type="HAMAP-Rule" id="MF_00193"/>
    </source>
</evidence>
<comment type="function">
    <text evidence="1">Catalyzes the ATP-dependent amidation of deamido-NAD to form NAD. Uses ammonia as a nitrogen source.</text>
</comment>
<comment type="catalytic activity">
    <reaction evidence="1">
        <text>deamido-NAD(+) + NH4(+) + ATP = AMP + diphosphate + NAD(+) + H(+)</text>
        <dbReference type="Rhea" id="RHEA:21188"/>
        <dbReference type="ChEBI" id="CHEBI:15378"/>
        <dbReference type="ChEBI" id="CHEBI:28938"/>
        <dbReference type="ChEBI" id="CHEBI:30616"/>
        <dbReference type="ChEBI" id="CHEBI:33019"/>
        <dbReference type="ChEBI" id="CHEBI:57540"/>
        <dbReference type="ChEBI" id="CHEBI:58437"/>
        <dbReference type="ChEBI" id="CHEBI:456215"/>
        <dbReference type="EC" id="6.3.1.5"/>
    </reaction>
</comment>
<comment type="pathway">
    <text evidence="1">Cofactor biosynthesis; NAD(+) biosynthesis; NAD(+) from deamido-NAD(+) (ammonia route): step 1/1.</text>
</comment>
<comment type="subunit">
    <text evidence="1">Homodimer.</text>
</comment>
<comment type="similarity">
    <text evidence="1">Belongs to the NAD synthetase family.</text>
</comment>
<dbReference type="EC" id="6.3.1.5" evidence="1"/>
<dbReference type="EMBL" id="AM747721">
    <property type="protein sequence ID" value="CAR56341.1"/>
    <property type="molecule type" value="Genomic_DNA"/>
</dbReference>
<dbReference type="RefSeq" id="WP_006483847.1">
    <property type="nucleotide sequence ID" value="NC_011001.1"/>
</dbReference>
<dbReference type="SMR" id="B4EIP2"/>
<dbReference type="GeneID" id="56562995"/>
<dbReference type="KEGG" id="bcj:BCAM2476"/>
<dbReference type="eggNOG" id="COG0171">
    <property type="taxonomic scope" value="Bacteria"/>
</dbReference>
<dbReference type="HOGENOM" id="CLU_059327_3_0_4"/>
<dbReference type="BioCyc" id="BCEN216591:G1G1V-6580-MONOMER"/>
<dbReference type="UniPathway" id="UPA00253">
    <property type="reaction ID" value="UER00333"/>
</dbReference>
<dbReference type="Proteomes" id="UP000001035">
    <property type="component" value="Chromosome 2"/>
</dbReference>
<dbReference type="GO" id="GO:0005737">
    <property type="term" value="C:cytoplasm"/>
    <property type="evidence" value="ECO:0007669"/>
    <property type="project" value="InterPro"/>
</dbReference>
<dbReference type="GO" id="GO:0005524">
    <property type="term" value="F:ATP binding"/>
    <property type="evidence" value="ECO:0007669"/>
    <property type="project" value="UniProtKB-UniRule"/>
</dbReference>
<dbReference type="GO" id="GO:0004359">
    <property type="term" value="F:glutaminase activity"/>
    <property type="evidence" value="ECO:0007669"/>
    <property type="project" value="InterPro"/>
</dbReference>
<dbReference type="GO" id="GO:0046872">
    <property type="term" value="F:metal ion binding"/>
    <property type="evidence" value="ECO:0007669"/>
    <property type="project" value="UniProtKB-KW"/>
</dbReference>
<dbReference type="GO" id="GO:0003952">
    <property type="term" value="F:NAD+ synthase (glutamine-hydrolyzing) activity"/>
    <property type="evidence" value="ECO:0007669"/>
    <property type="project" value="InterPro"/>
</dbReference>
<dbReference type="GO" id="GO:0008795">
    <property type="term" value="F:NAD+ synthase activity"/>
    <property type="evidence" value="ECO:0007669"/>
    <property type="project" value="UniProtKB-UniRule"/>
</dbReference>
<dbReference type="GO" id="GO:0009435">
    <property type="term" value="P:NAD biosynthetic process"/>
    <property type="evidence" value="ECO:0007669"/>
    <property type="project" value="UniProtKB-UniRule"/>
</dbReference>
<dbReference type="CDD" id="cd00553">
    <property type="entry name" value="NAD_synthase"/>
    <property type="match status" value="1"/>
</dbReference>
<dbReference type="Gene3D" id="3.40.50.620">
    <property type="entry name" value="HUPs"/>
    <property type="match status" value="1"/>
</dbReference>
<dbReference type="HAMAP" id="MF_00193">
    <property type="entry name" value="NadE_ammonia_dep"/>
    <property type="match status" value="1"/>
</dbReference>
<dbReference type="InterPro" id="IPR022310">
    <property type="entry name" value="NAD/GMP_synthase"/>
</dbReference>
<dbReference type="InterPro" id="IPR003694">
    <property type="entry name" value="NAD_synthase"/>
</dbReference>
<dbReference type="InterPro" id="IPR022926">
    <property type="entry name" value="NH(3)-dep_NAD(+)_synth"/>
</dbReference>
<dbReference type="InterPro" id="IPR014729">
    <property type="entry name" value="Rossmann-like_a/b/a_fold"/>
</dbReference>
<dbReference type="NCBIfam" id="TIGR00552">
    <property type="entry name" value="nadE"/>
    <property type="match status" value="1"/>
</dbReference>
<dbReference type="NCBIfam" id="NF001979">
    <property type="entry name" value="PRK00768.1"/>
    <property type="match status" value="1"/>
</dbReference>
<dbReference type="PANTHER" id="PTHR23090">
    <property type="entry name" value="NH 3 /GLUTAMINE-DEPENDENT NAD + SYNTHETASE"/>
    <property type="match status" value="1"/>
</dbReference>
<dbReference type="PANTHER" id="PTHR23090:SF7">
    <property type="entry name" value="NH(3)-DEPENDENT NAD(+) SYNTHETASE"/>
    <property type="match status" value="1"/>
</dbReference>
<dbReference type="Pfam" id="PF02540">
    <property type="entry name" value="NAD_synthase"/>
    <property type="match status" value="1"/>
</dbReference>
<dbReference type="SUPFAM" id="SSF52402">
    <property type="entry name" value="Adenine nucleotide alpha hydrolases-like"/>
    <property type="match status" value="1"/>
</dbReference>
<reference key="1">
    <citation type="journal article" date="2009" name="J. Bacteriol.">
        <title>The genome of Burkholderia cenocepacia J2315, an epidemic pathogen of cystic fibrosis patients.</title>
        <authorList>
            <person name="Holden M.T."/>
            <person name="Seth-Smith H.M."/>
            <person name="Crossman L.C."/>
            <person name="Sebaihia M."/>
            <person name="Bentley S.D."/>
            <person name="Cerdeno-Tarraga A.M."/>
            <person name="Thomson N.R."/>
            <person name="Bason N."/>
            <person name="Quail M.A."/>
            <person name="Sharp S."/>
            <person name="Cherevach I."/>
            <person name="Churcher C."/>
            <person name="Goodhead I."/>
            <person name="Hauser H."/>
            <person name="Holroyd N."/>
            <person name="Mungall K."/>
            <person name="Scott P."/>
            <person name="Walker D."/>
            <person name="White B."/>
            <person name="Rose H."/>
            <person name="Iversen P."/>
            <person name="Mil-Homens D."/>
            <person name="Rocha E.P."/>
            <person name="Fialho A.M."/>
            <person name="Baldwin A."/>
            <person name="Dowson C."/>
            <person name="Barrell B.G."/>
            <person name="Govan J.R."/>
            <person name="Vandamme P."/>
            <person name="Hart C.A."/>
            <person name="Mahenthiralingam E."/>
            <person name="Parkhill J."/>
        </authorList>
    </citation>
    <scope>NUCLEOTIDE SEQUENCE [LARGE SCALE GENOMIC DNA]</scope>
    <source>
        <strain>ATCC BAA-245 / DSM 16553 / LMG 16656 / NCTC 13227 / J2315 / CF5610</strain>
    </source>
</reference>
<feature type="chain" id="PRO_1000099005" description="NH(3)-dependent NAD(+) synthetase">
    <location>
        <begin position="1"/>
        <end position="282"/>
    </location>
</feature>
<feature type="binding site" evidence="1">
    <location>
        <begin position="51"/>
        <end position="58"/>
    </location>
    <ligand>
        <name>ATP</name>
        <dbReference type="ChEBI" id="CHEBI:30616"/>
    </ligand>
</feature>
<feature type="binding site" evidence="1">
    <location>
        <position position="57"/>
    </location>
    <ligand>
        <name>Mg(2+)</name>
        <dbReference type="ChEBI" id="CHEBI:18420"/>
    </ligand>
</feature>
<feature type="binding site" evidence="1">
    <location>
        <position position="148"/>
    </location>
    <ligand>
        <name>deamido-NAD(+)</name>
        <dbReference type="ChEBI" id="CHEBI:58437"/>
    </ligand>
</feature>
<feature type="binding site" evidence="1">
    <location>
        <position position="168"/>
    </location>
    <ligand>
        <name>ATP</name>
        <dbReference type="ChEBI" id="CHEBI:30616"/>
    </ligand>
</feature>
<feature type="binding site" evidence="1">
    <location>
        <position position="173"/>
    </location>
    <ligand>
        <name>Mg(2+)</name>
        <dbReference type="ChEBI" id="CHEBI:18420"/>
    </ligand>
</feature>
<feature type="binding site" evidence="1">
    <location>
        <position position="181"/>
    </location>
    <ligand>
        <name>deamido-NAD(+)</name>
        <dbReference type="ChEBI" id="CHEBI:58437"/>
    </ligand>
</feature>
<feature type="binding site" evidence="1">
    <location>
        <position position="188"/>
    </location>
    <ligand>
        <name>deamido-NAD(+)</name>
        <dbReference type="ChEBI" id="CHEBI:58437"/>
    </ligand>
</feature>
<feature type="binding site" evidence="1">
    <location>
        <position position="197"/>
    </location>
    <ligand>
        <name>ATP</name>
        <dbReference type="ChEBI" id="CHEBI:30616"/>
    </ligand>
</feature>
<feature type="binding site" evidence="1">
    <location>
        <position position="219"/>
    </location>
    <ligand>
        <name>ATP</name>
        <dbReference type="ChEBI" id="CHEBI:30616"/>
    </ligand>
</feature>
<feature type="binding site" evidence="1">
    <location>
        <begin position="268"/>
        <end position="269"/>
    </location>
    <ligand>
        <name>deamido-NAD(+)</name>
        <dbReference type="ChEBI" id="CHEBI:58437"/>
    </ligand>
</feature>
<proteinExistence type="inferred from homology"/>
<name>NADE_BURCJ</name>
<organism>
    <name type="scientific">Burkholderia cenocepacia (strain ATCC BAA-245 / DSM 16553 / LMG 16656 / NCTC 13227 / J2315 / CF5610)</name>
    <name type="common">Burkholderia cepacia (strain J2315)</name>
    <dbReference type="NCBI Taxonomy" id="216591"/>
    <lineage>
        <taxon>Bacteria</taxon>
        <taxon>Pseudomonadati</taxon>
        <taxon>Pseudomonadota</taxon>
        <taxon>Betaproteobacteria</taxon>
        <taxon>Burkholderiales</taxon>
        <taxon>Burkholderiaceae</taxon>
        <taxon>Burkholderia</taxon>
        <taxon>Burkholderia cepacia complex</taxon>
    </lineage>
</organism>
<accession>B4EIP2</accession>
<sequence>MTSADYASRQRAIIAELNVAPHFDAEAEIDRRIDFLAQYLRSTGLRTYVLGISGGVDSSTAGRLAQLSVERLRADGYDARFIAMRLPNGVQNDEEDAQRALAFVRADEVLTVDVKPAADAMLRSLVASGHAFDTPAQQDFVHGNIKARERMIAQYAVAGARRGIVIGTDHAAESLMGFFTKFGDGGADILPLAGLNKRRVRGVARALGGEELIVMKVPTADLEELRPLRPDEHAYGVTYDEIDDFLEGKPVADRVYETVLRFYDGSRHKRALPYTMFDWPAA</sequence>
<keyword id="KW-0067">ATP-binding</keyword>
<keyword id="KW-0436">Ligase</keyword>
<keyword id="KW-0460">Magnesium</keyword>
<keyword id="KW-0479">Metal-binding</keyword>
<keyword id="KW-0520">NAD</keyword>
<keyword id="KW-0547">Nucleotide-binding</keyword>